<comment type="function">
    <text evidence="4 5">Upon bacterial lipopolysaccharide stimulation, mediates clathrin-dependent internalization of TLR4 in dendritic cells, resulting in activation of TICAM1-mediated signaling and subsequent IFNB1 production (PubMed:27022195). May regulate B-cell antigen receptor-mediated signaling.</text>
</comment>
<comment type="subcellular location">
    <subcellularLocation>
        <location evidence="2">Cell membrane</location>
        <topology evidence="2">Lipid-anchor</topology>
    </subcellularLocation>
</comment>
<comment type="alternative products">
    <event type="alternative splicing"/>
    <isoform>
        <id>Q8CHX7-1</id>
        <name>1</name>
        <sequence type="displayed"/>
    </isoform>
    <isoform>
        <id>Q8CHX7-2</id>
        <name>2</name>
        <sequence type="described" ref="VSP_015324 VSP_015325"/>
    </isoform>
</comment>
<comment type="tissue specificity">
    <text evidence="4 5">Expressed in B-cells, heart, brain, spleen, large intestine and lung (PubMed:19414744). Expressed in dendritic cells and macrophages (PubMed:27022195).</text>
</comment>
<comment type="disruption phenotype">
    <text evidence="5">Double RFTN1 and RFTN2 mutant mice show no visible phenotype under pathogen-free conditions but show greatly reduced interferon beta production in splenic dendritic cells under poly(I:C) or lipopolysaccharide stimulation.</text>
</comment>
<comment type="similarity">
    <text evidence="7">Belongs to the raftlin family.</text>
</comment>
<dbReference type="EMBL" id="AK014318">
    <property type="protein sequence ID" value="BAB29269.1"/>
    <property type="status" value="ALT_TERM"/>
    <property type="molecule type" value="mRNA"/>
</dbReference>
<dbReference type="EMBL" id="BC026871">
    <property type="protein sequence ID" value="AAH26871.1"/>
    <property type="molecule type" value="mRNA"/>
</dbReference>
<dbReference type="EMBL" id="BC038341">
    <property type="protein sequence ID" value="AAH38341.1"/>
    <property type="molecule type" value="mRNA"/>
</dbReference>
<dbReference type="CCDS" id="CCDS14962.1">
    <molecule id="Q8CHX7-1"/>
</dbReference>
<dbReference type="RefSeq" id="NP_082989.1">
    <molecule id="Q8CHX7-1"/>
    <property type="nucleotide sequence ID" value="NM_028713.2"/>
</dbReference>
<dbReference type="BioGRID" id="216423">
    <property type="interactions" value="1"/>
</dbReference>
<dbReference type="FunCoup" id="Q8CHX7">
    <property type="interactions" value="89"/>
</dbReference>
<dbReference type="STRING" id="10090.ENSMUSP00000027121"/>
<dbReference type="GlyGen" id="Q8CHX7">
    <property type="glycosylation" value="1 site, 1 N-linked glycan (1 site)"/>
</dbReference>
<dbReference type="iPTMnet" id="Q8CHX7"/>
<dbReference type="PhosphoSitePlus" id="Q8CHX7"/>
<dbReference type="SwissPalm" id="Q8CHX7"/>
<dbReference type="jPOST" id="Q8CHX7"/>
<dbReference type="PaxDb" id="10090-ENSMUSP00000027121"/>
<dbReference type="PeptideAtlas" id="Q8CHX7"/>
<dbReference type="ProteomicsDB" id="255013">
    <molecule id="Q8CHX7-1"/>
</dbReference>
<dbReference type="ProteomicsDB" id="255014">
    <molecule id="Q8CHX7-2"/>
</dbReference>
<dbReference type="Pumba" id="Q8CHX7"/>
<dbReference type="Antibodypedia" id="34069">
    <property type="antibodies" value="123 antibodies from 24 providers"/>
</dbReference>
<dbReference type="DNASU" id="74013"/>
<dbReference type="Ensembl" id="ENSMUST00000027121.15">
    <molecule id="Q8CHX7-1"/>
    <property type="protein sequence ID" value="ENSMUSP00000027121.9"/>
    <property type="gene ID" value="ENSMUSG00000025978.15"/>
</dbReference>
<dbReference type="Ensembl" id="ENSMUST00000114428.3">
    <molecule id="Q8CHX7-2"/>
    <property type="protein sequence ID" value="ENSMUSP00000110071.3"/>
    <property type="gene ID" value="ENSMUSG00000025978.15"/>
</dbReference>
<dbReference type="GeneID" id="74013"/>
<dbReference type="KEGG" id="mmu:74013"/>
<dbReference type="UCSC" id="uc007bag.1">
    <molecule id="Q8CHX7-1"/>
    <property type="organism name" value="mouse"/>
</dbReference>
<dbReference type="AGR" id="MGI:1921263"/>
<dbReference type="CTD" id="130132"/>
<dbReference type="MGI" id="MGI:1921263">
    <property type="gene designation" value="Rftn2"/>
</dbReference>
<dbReference type="VEuPathDB" id="HostDB:ENSMUSG00000025978"/>
<dbReference type="eggNOG" id="ENOG502QVRY">
    <property type="taxonomic scope" value="Eukaryota"/>
</dbReference>
<dbReference type="GeneTree" id="ENSGT00530000063609"/>
<dbReference type="HOGENOM" id="CLU_025878_0_0_1"/>
<dbReference type="InParanoid" id="Q8CHX7"/>
<dbReference type="OMA" id="SWTYQEG"/>
<dbReference type="OrthoDB" id="9942562at2759"/>
<dbReference type="PhylomeDB" id="Q8CHX7"/>
<dbReference type="TreeFam" id="TF333285"/>
<dbReference type="BioGRID-ORCS" id="74013">
    <property type="hits" value="2 hits in 76 CRISPR screens"/>
</dbReference>
<dbReference type="ChiTaRS" id="Rftn2">
    <property type="organism name" value="mouse"/>
</dbReference>
<dbReference type="PRO" id="PR:Q8CHX7"/>
<dbReference type="Proteomes" id="UP000000589">
    <property type="component" value="Chromosome 1"/>
</dbReference>
<dbReference type="RNAct" id="Q8CHX7">
    <property type="molecule type" value="protein"/>
</dbReference>
<dbReference type="Bgee" id="ENSMUSG00000025978">
    <property type="expression patterns" value="Expressed in humerus cartilage element and 197 other cell types or tissues"/>
</dbReference>
<dbReference type="ExpressionAtlas" id="Q8CHX7">
    <property type="expression patterns" value="baseline and differential"/>
</dbReference>
<dbReference type="GO" id="GO:0005886">
    <property type="term" value="C:plasma membrane"/>
    <property type="evidence" value="ECO:0007669"/>
    <property type="project" value="UniProtKB-SubCell"/>
</dbReference>
<dbReference type="GO" id="GO:0033227">
    <property type="term" value="P:dsRNA transport"/>
    <property type="evidence" value="ECO:0000315"/>
    <property type="project" value="MGI"/>
</dbReference>
<dbReference type="GO" id="GO:0043330">
    <property type="term" value="P:response to exogenous dsRNA"/>
    <property type="evidence" value="ECO:0000315"/>
    <property type="project" value="MGI"/>
</dbReference>
<dbReference type="InterPro" id="IPR028169">
    <property type="entry name" value="Raftlin"/>
</dbReference>
<dbReference type="PANTHER" id="PTHR17601:SF1">
    <property type="entry name" value="RAFTLIN-2"/>
    <property type="match status" value="1"/>
</dbReference>
<dbReference type="PANTHER" id="PTHR17601">
    <property type="entry name" value="RAFTLIN-RELATED"/>
    <property type="match status" value="1"/>
</dbReference>
<dbReference type="Pfam" id="PF15250">
    <property type="entry name" value="Raftlin"/>
    <property type="match status" value="1"/>
</dbReference>
<organism>
    <name type="scientific">Mus musculus</name>
    <name type="common">Mouse</name>
    <dbReference type="NCBI Taxonomy" id="10090"/>
    <lineage>
        <taxon>Eukaryota</taxon>
        <taxon>Metazoa</taxon>
        <taxon>Chordata</taxon>
        <taxon>Craniata</taxon>
        <taxon>Vertebrata</taxon>
        <taxon>Euteleostomi</taxon>
        <taxon>Mammalia</taxon>
        <taxon>Eutheria</taxon>
        <taxon>Euarchontoglires</taxon>
        <taxon>Glires</taxon>
        <taxon>Rodentia</taxon>
        <taxon>Myomorpha</taxon>
        <taxon>Muroidea</taxon>
        <taxon>Muridae</taxon>
        <taxon>Murinae</taxon>
        <taxon>Mus</taxon>
        <taxon>Mus</taxon>
    </lineage>
</organism>
<reference key="1">
    <citation type="journal article" date="2005" name="Science">
        <title>The transcriptional landscape of the mammalian genome.</title>
        <authorList>
            <person name="Carninci P."/>
            <person name="Kasukawa T."/>
            <person name="Katayama S."/>
            <person name="Gough J."/>
            <person name="Frith M.C."/>
            <person name="Maeda N."/>
            <person name="Oyama R."/>
            <person name="Ravasi T."/>
            <person name="Lenhard B."/>
            <person name="Wells C."/>
            <person name="Kodzius R."/>
            <person name="Shimokawa K."/>
            <person name="Bajic V.B."/>
            <person name="Brenner S.E."/>
            <person name="Batalov S."/>
            <person name="Forrest A.R."/>
            <person name="Zavolan M."/>
            <person name="Davis M.J."/>
            <person name="Wilming L.G."/>
            <person name="Aidinis V."/>
            <person name="Allen J.E."/>
            <person name="Ambesi-Impiombato A."/>
            <person name="Apweiler R."/>
            <person name="Aturaliya R.N."/>
            <person name="Bailey T.L."/>
            <person name="Bansal M."/>
            <person name="Baxter L."/>
            <person name="Beisel K.W."/>
            <person name="Bersano T."/>
            <person name="Bono H."/>
            <person name="Chalk A.M."/>
            <person name="Chiu K.P."/>
            <person name="Choudhary V."/>
            <person name="Christoffels A."/>
            <person name="Clutterbuck D.R."/>
            <person name="Crowe M.L."/>
            <person name="Dalla E."/>
            <person name="Dalrymple B.P."/>
            <person name="de Bono B."/>
            <person name="Della Gatta G."/>
            <person name="di Bernardo D."/>
            <person name="Down T."/>
            <person name="Engstrom P."/>
            <person name="Fagiolini M."/>
            <person name="Faulkner G."/>
            <person name="Fletcher C.F."/>
            <person name="Fukushima T."/>
            <person name="Furuno M."/>
            <person name="Futaki S."/>
            <person name="Gariboldi M."/>
            <person name="Georgii-Hemming P."/>
            <person name="Gingeras T.R."/>
            <person name="Gojobori T."/>
            <person name="Green R.E."/>
            <person name="Gustincich S."/>
            <person name="Harbers M."/>
            <person name="Hayashi Y."/>
            <person name="Hensch T.K."/>
            <person name="Hirokawa N."/>
            <person name="Hill D."/>
            <person name="Huminiecki L."/>
            <person name="Iacono M."/>
            <person name="Ikeo K."/>
            <person name="Iwama A."/>
            <person name="Ishikawa T."/>
            <person name="Jakt M."/>
            <person name="Kanapin A."/>
            <person name="Katoh M."/>
            <person name="Kawasawa Y."/>
            <person name="Kelso J."/>
            <person name="Kitamura H."/>
            <person name="Kitano H."/>
            <person name="Kollias G."/>
            <person name="Krishnan S.P."/>
            <person name="Kruger A."/>
            <person name="Kummerfeld S.K."/>
            <person name="Kurochkin I.V."/>
            <person name="Lareau L.F."/>
            <person name="Lazarevic D."/>
            <person name="Lipovich L."/>
            <person name="Liu J."/>
            <person name="Liuni S."/>
            <person name="McWilliam S."/>
            <person name="Madan Babu M."/>
            <person name="Madera M."/>
            <person name="Marchionni L."/>
            <person name="Matsuda H."/>
            <person name="Matsuzawa S."/>
            <person name="Miki H."/>
            <person name="Mignone F."/>
            <person name="Miyake S."/>
            <person name="Morris K."/>
            <person name="Mottagui-Tabar S."/>
            <person name="Mulder N."/>
            <person name="Nakano N."/>
            <person name="Nakauchi H."/>
            <person name="Ng P."/>
            <person name="Nilsson R."/>
            <person name="Nishiguchi S."/>
            <person name="Nishikawa S."/>
            <person name="Nori F."/>
            <person name="Ohara O."/>
            <person name="Okazaki Y."/>
            <person name="Orlando V."/>
            <person name="Pang K.C."/>
            <person name="Pavan W.J."/>
            <person name="Pavesi G."/>
            <person name="Pesole G."/>
            <person name="Petrovsky N."/>
            <person name="Piazza S."/>
            <person name="Reed J."/>
            <person name="Reid J.F."/>
            <person name="Ring B.Z."/>
            <person name="Ringwald M."/>
            <person name="Rost B."/>
            <person name="Ruan Y."/>
            <person name="Salzberg S.L."/>
            <person name="Sandelin A."/>
            <person name="Schneider C."/>
            <person name="Schoenbach C."/>
            <person name="Sekiguchi K."/>
            <person name="Semple C.A."/>
            <person name="Seno S."/>
            <person name="Sessa L."/>
            <person name="Sheng Y."/>
            <person name="Shibata Y."/>
            <person name="Shimada H."/>
            <person name="Shimada K."/>
            <person name="Silva D."/>
            <person name="Sinclair B."/>
            <person name="Sperling S."/>
            <person name="Stupka E."/>
            <person name="Sugiura K."/>
            <person name="Sultana R."/>
            <person name="Takenaka Y."/>
            <person name="Taki K."/>
            <person name="Tammoja K."/>
            <person name="Tan S.L."/>
            <person name="Tang S."/>
            <person name="Taylor M.S."/>
            <person name="Tegner J."/>
            <person name="Teichmann S.A."/>
            <person name="Ueda H.R."/>
            <person name="van Nimwegen E."/>
            <person name="Verardo R."/>
            <person name="Wei C.L."/>
            <person name="Yagi K."/>
            <person name="Yamanishi H."/>
            <person name="Zabarovsky E."/>
            <person name="Zhu S."/>
            <person name="Zimmer A."/>
            <person name="Hide W."/>
            <person name="Bult C."/>
            <person name="Grimmond S.M."/>
            <person name="Teasdale R.D."/>
            <person name="Liu E.T."/>
            <person name="Brusic V."/>
            <person name="Quackenbush J."/>
            <person name="Wahlestedt C."/>
            <person name="Mattick J.S."/>
            <person name="Hume D.A."/>
            <person name="Kai C."/>
            <person name="Sasaki D."/>
            <person name="Tomaru Y."/>
            <person name="Fukuda S."/>
            <person name="Kanamori-Katayama M."/>
            <person name="Suzuki M."/>
            <person name="Aoki J."/>
            <person name="Arakawa T."/>
            <person name="Iida J."/>
            <person name="Imamura K."/>
            <person name="Itoh M."/>
            <person name="Kato T."/>
            <person name="Kawaji H."/>
            <person name="Kawagashira N."/>
            <person name="Kawashima T."/>
            <person name="Kojima M."/>
            <person name="Kondo S."/>
            <person name="Konno H."/>
            <person name="Nakano K."/>
            <person name="Ninomiya N."/>
            <person name="Nishio T."/>
            <person name="Okada M."/>
            <person name="Plessy C."/>
            <person name="Shibata K."/>
            <person name="Shiraki T."/>
            <person name="Suzuki S."/>
            <person name="Tagami M."/>
            <person name="Waki K."/>
            <person name="Watahiki A."/>
            <person name="Okamura-Oho Y."/>
            <person name="Suzuki H."/>
            <person name="Kawai J."/>
            <person name="Hayashizaki Y."/>
        </authorList>
    </citation>
    <scope>NUCLEOTIDE SEQUENCE [LARGE SCALE MRNA] (ISOFORM 1)</scope>
    <source>
        <strain>C57BL/6J</strain>
        <tissue>Head</tissue>
    </source>
</reference>
<reference key="2">
    <citation type="journal article" date="2004" name="Genome Res.">
        <title>The status, quality, and expansion of the NIH full-length cDNA project: the Mammalian Gene Collection (MGC).</title>
        <authorList>
            <consortium name="The MGC Project Team"/>
        </authorList>
    </citation>
    <scope>NUCLEOTIDE SEQUENCE [LARGE SCALE MRNA] (ISOFORMS 1 AND 2)</scope>
    <source>
        <strain>FVB/N</strain>
        <tissue>Colon</tissue>
        <tissue>Mammary tumor</tissue>
    </source>
</reference>
<reference key="3">
    <citation type="journal article" date="2009" name="J. Immunol.">
        <title>A major lipid raft protein raftlin modulates T cell receptor signaling and enhances th17-mediated autoimmune responses.</title>
        <authorList>
            <person name="Saeki K."/>
            <person name="Fukuyama S."/>
            <person name="Ayada T."/>
            <person name="Nakaya M."/>
            <person name="Aki D."/>
            <person name="Takaesu G."/>
            <person name="Hanada T."/>
            <person name="Matsumura Y."/>
            <person name="Kobayashi T."/>
            <person name="Nakagawa R."/>
            <person name="Yoshimura A."/>
        </authorList>
    </citation>
    <scope>FUNCTION</scope>
    <scope>TISSUE SPECIFICITY</scope>
</reference>
<reference key="4">
    <citation type="journal article" date="2010" name="Cell">
        <title>A tissue-specific atlas of mouse protein phosphorylation and expression.</title>
        <authorList>
            <person name="Huttlin E.L."/>
            <person name="Jedrychowski M.P."/>
            <person name="Elias J.E."/>
            <person name="Goswami T."/>
            <person name="Rad R."/>
            <person name="Beausoleil S.A."/>
            <person name="Villen J."/>
            <person name="Haas W."/>
            <person name="Sowa M.E."/>
            <person name="Gygi S.P."/>
        </authorList>
    </citation>
    <scope>PHOSPHORYLATION [LARGE SCALE ANALYSIS] AT SER-404; THR-408 AND SER-429</scope>
    <scope>IDENTIFICATION BY MASS SPECTROMETRY [LARGE SCALE ANALYSIS]</scope>
    <source>
        <tissue>Brain</tissue>
        <tissue>Kidney</tissue>
        <tissue>Lung</tissue>
        <tissue>Spleen</tissue>
    </source>
</reference>
<reference key="5">
    <citation type="journal article" date="2016" name="J. Immunol.">
        <title>Raftlin controls lipopolysaccharide-induced TLR4 internalization and TICAM-1 signaling in a cell type-specific manner.</title>
        <authorList>
            <person name="Tatematsu M."/>
            <person name="Yoshida R."/>
            <person name="Morioka Y."/>
            <person name="Ishii N."/>
            <person name="Funami K."/>
            <person name="Watanabe A."/>
            <person name="Saeki K."/>
            <person name="Seya T."/>
            <person name="Matsumoto M."/>
        </authorList>
    </citation>
    <scope>FUNCTION</scope>
    <scope>TISSUE SPECIFICITY</scope>
    <scope>DISRUPTION PHENOTYPE</scope>
</reference>
<name>RFTN2_MOUSE</name>
<proteinExistence type="evidence at protein level"/>
<gene>
    <name type="primary">Rftn2</name>
</gene>
<accession>Q8CHX7</accession>
<accession>Q8R306</accession>
<accession>Q9CXJ5</accession>
<sequence length="500" mass="54972">MGCGLRKLEDPDESSPGKIFSTLKRPQVETKTEFAYEYALLDFTLQASTNPDVIKINSVLDIVAKVEDYYLKGYVVGAIHPVIQPVGQRKHLPASHLYRAVLSRLKLSPKHSAAGGQRRARLVMEECPLTCEAQANDAAKELMDKINAAAKRGMKFVGLVSQCYLPSMHCNGASHDGVAESGLHVRQDSQDNCKGWNEGALGGHLSESGVEEEPQHESGQHQTERNSSPSYANPKRGEAPDGKLYMVFNAFEEDAASWAYQEGVLSMKVTRKGAVISALDANWLELTTFYYKQGFSLIDSFVCWETPKGDQLPKSLEGFFIYEEEGSGVPGSNRRGNDAIVVEQWTVIEGCEIKTDYGPLLHTLAEFGWLLTSVLPTPILRHDSEGNLATKQVVFLQRPVTWNSAAQTPERKGSRLLKGEDRNKVSSRSLGLDTNASQAAGGRAPLEEGSLSPSRECWTKEERPAQSDSFSGFSSSDSVLRELDDGQFDQEEGVTQVTCM</sequence>
<keyword id="KW-0025">Alternative splicing</keyword>
<keyword id="KW-1003">Cell membrane</keyword>
<keyword id="KW-0449">Lipoprotein</keyword>
<keyword id="KW-0472">Membrane</keyword>
<keyword id="KW-0519">Myristate</keyword>
<keyword id="KW-0564">Palmitate</keyword>
<keyword id="KW-0597">Phosphoprotein</keyword>
<keyword id="KW-1185">Reference proteome</keyword>
<feature type="initiator methionine" description="Removed">
    <location>
        <position position="1"/>
    </location>
</feature>
<feature type="chain" id="PRO_0000089339" description="Raftlin-2">
    <location>
        <begin position="2"/>
        <end position="500"/>
    </location>
</feature>
<feature type="region of interest" description="Disordered" evidence="3">
    <location>
        <begin position="203"/>
        <end position="236"/>
    </location>
</feature>
<feature type="region of interest" description="Disordered" evidence="3">
    <location>
        <begin position="406"/>
        <end position="500"/>
    </location>
</feature>
<feature type="compositionally biased region" description="Basic and acidic residues" evidence="3">
    <location>
        <begin position="213"/>
        <end position="224"/>
    </location>
</feature>
<feature type="compositionally biased region" description="Basic and acidic residues" evidence="3">
    <location>
        <begin position="409"/>
        <end position="424"/>
    </location>
</feature>
<feature type="compositionally biased region" description="Polar residues" evidence="3">
    <location>
        <begin position="426"/>
        <end position="438"/>
    </location>
</feature>
<feature type="compositionally biased region" description="Low complexity" evidence="3">
    <location>
        <begin position="467"/>
        <end position="478"/>
    </location>
</feature>
<feature type="modified residue" description="Phosphoserine" evidence="8">
    <location>
        <position position="404"/>
    </location>
</feature>
<feature type="modified residue" description="Phosphothreonine" evidence="8">
    <location>
        <position position="408"/>
    </location>
</feature>
<feature type="modified residue" description="Phosphoserine" evidence="8">
    <location>
        <position position="429"/>
    </location>
</feature>
<feature type="lipid moiety-binding region" description="N-myristoyl glycine" evidence="1">
    <location>
        <position position="2"/>
    </location>
</feature>
<feature type="lipid moiety-binding region" description="S-palmitoyl cysteine" evidence="1">
    <location>
        <position position="3"/>
    </location>
</feature>
<feature type="splice variant" id="VSP_015324" description="In isoform 2." evidence="6">
    <original>GDQLPKSLEGFFIYEEEGSGVPGSNRRGNDAIVVEQ</original>
    <variation>VAKLEAFQLSVSDKLPKGKQKYSFQSLSGIPASGLA</variation>
    <location>
        <begin position="309"/>
        <end position="344"/>
    </location>
</feature>
<feature type="splice variant" id="VSP_015325" description="In isoform 2." evidence="6">
    <location>
        <begin position="345"/>
        <end position="500"/>
    </location>
</feature>
<protein>
    <recommendedName>
        <fullName>Raftlin-2</fullName>
    </recommendedName>
    <alternativeName>
        <fullName>Raft-linking protein 2</fullName>
    </alternativeName>
</protein>
<evidence type="ECO:0000250" key="1"/>
<evidence type="ECO:0000250" key="2">
    <source>
        <dbReference type="UniProtKB" id="Q14699"/>
    </source>
</evidence>
<evidence type="ECO:0000256" key="3">
    <source>
        <dbReference type="SAM" id="MobiDB-lite"/>
    </source>
</evidence>
<evidence type="ECO:0000269" key="4">
    <source>
    </source>
</evidence>
<evidence type="ECO:0000269" key="5">
    <source>
    </source>
</evidence>
<evidence type="ECO:0000303" key="6">
    <source>
    </source>
</evidence>
<evidence type="ECO:0000305" key="7"/>
<evidence type="ECO:0007744" key="8">
    <source>
    </source>
</evidence>